<comment type="catalytic activity">
    <reaction>
        <text>O-phospho-L-seryl-[protein] + H2O = L-seryl-[protein] + phosphate</text>
        <dbReference type="Rhea" id="RHEA:20629"/>
        <dbReference type="Rhea" id="RHEA-COMP:9863"/>
        <dbReference type="Rhea" id="RHEA-COMP:11604"/>
        <dbReference type="ChEBI" id="CHEBI:15377"/>
        <dbReference type="ChEBI" id="CHEBI:29999"/>
        <dbReference type="ChEBI" id="CHEBI:43474"/>
        <dbReference type="ChEBI" id="CHEBI:83421"/>
        <dbReference type="EC" id="3.1.3.16"/>
    </reaction>
</comment>
<comment type="catalytic activity">
    <reaction>
        <text>O-phospho-L-threonyl-[protein] + H2O = L-threonyl-[protein] + phosphate</text>
        <dbReference type="Rhea" id="RHEA:47004"/>
        <dbReference type="Rhea" id="RHEA-COMP:11060"/>
        <dbReference type="Rhea" id="RHEA-COMP:11605"/>
        <dbReference type="ChEBI" id="CHEBI:15377"/>
        <dbReference type="ChEBI" id="CHEBI:30013"/>
        <dbReference type="ChEBI" id="CHEBI:43474"/>
        <dbReference type="ChEBI" id="CHEBI:61977"/>
        <dbReference type="EC" id="3.1.3.16"/>
    </reaction>
</comment>
<comment type="cofactor">
    <cofactor evidence="1">
        <name>Mn(2+)</name>
        <dbReference type="ChEBI" id="CHEBI:29035"/>
    </cofactor>
    <text evidence="1">Binds 2 manganese ions per subunit.</text>
</comment>
<comment type="subunit">
    <text evidence="1 2 5 6 7">PP2A consists of a common heterodimeric core enzyme, composed of a 36 kDa catalytic subunit (subunit C) and a 65 kDa constant regulatory subunit (subunit A), that associates with a variety of regulatory subunits such as subunits B (the R2/B/PR55/B55, R3/B''/PR72/PR130/PR59 and R5/B'/B56 families) (By similarity). Interacts with TAF12B (By similarity) (PubMed:17526916). Interacts with SRK2E/OST1 (PubMed:26175513). Interacts with TAP46.</text>
</comment>
<comment type="subcellular location">
    <subcellularLocation>
        <location>Cytoplasm</location>
    </subcellularLocation>
</comment>
<comment type="alternative products">
    <event type="alternative splicing"/>
    <isoform>
        <id>Q07099-1</id>
        <name>1</name>
        <sequence type="displayed"/>
    </isoform>
    <isoform>
        <id>Q07099-2</id>
        <name>2</name>
        <sequence type="described" ref="VSP_028727 VSP_028728"/>
    </isoform>
</comment>
<comment type="PTM">
    <text evidence="10">Reversibly methyl esterified on Leu-306 by leucine carboxyl methyltransferase 1 (LCMT1) and pectin methylesterase 1 (PME1). Carboxyl methylation influences the affinity of the catalytic subunit for the different regulatory subunits, thereby modulating the PP2A holoenzyme's substrate specificity, enzyme activity and cellular localization.</text>
</comment>
<comment type="PTM">
    <text evidence="3">Phosphorylation of either threonine (by autophosphorylation-activated protein kinase) or tyrosine results in inactivation of the phosphatase. Auto-dephosphorylation has been suggested as a mechanism for reactivation.</text>
</comment>
<comment type="similarity">
    <text evidence="9">Belongs to the PPP phosphatase family. PP-2A subfamily.</text>
</comment>
<sequence length="306" mass="34961">MPLNGDLDRQIEQLMECKPLGEADVKILCDQAKAILVEEYNVQPVKCPVTVCGDIHGQFYDLIELFRIGGNAPDTNYLFMGDYVDRGYYSVETVSLLVALKVRYRDRLTILRGNHESRQITQVYGFYDECLRKYGNANVWKYFTDLFDYLPLTALIESQVFCLHGGLSPSLDTLDNIRSLDRIQEVPHEGPMCDLLWSDPDDRCGWGISPRGAGYTFGQDIATQFNHNNGLSLISRAHQLVMEGYNWCQEKNVVTVFSAPNYCYRCGNMAAILEIGEKMEQNFLQFDPAPRQVEPDTTRKTPDYFL</sequence>
<dbReference type="EC" id="3.1.3.16"/>
<dbReference type="EMBL" id="M96732">
    <property type="protein sequence ID" value="AAA32847.1"/>
    <property type="molecule type" value="mRNA"/>
</dbReference>
<dbReference type="EMBL" id="AC007258">
    <property type="protein sequence ID" value="AAD39326.1"/>
    <property type="molecule type" value="Genomic_DNA"/>
</dbReference>
<dbReference type="EMBL" id="CP002684">
    <property type="protein sequence ID" value="AEE33622.1"/>
    <property type="molecule type" value="Genomic_DNA"/>
</dbReference>
<dbReference type="EMBL" id="CP002684">
    <property type="protein sequence ID" value="AEE33623.1"/>
    <property type="molecule type" value="Genomic_DNA"/>
</dbReference>
<dbReference type="EMBL" id="AY063942">
    <property type="protein sequence ID" value="AAL36298.1"/>
    <property type="molecule type" value="mRNA"/>
</dbReference>
<dbReference type="EMBL" id="AY096543">
    <property type="protein sequence ID" value="AAM20193.1"/>
    <property type="molecule type" value="mRNA"/>
</dbReference>
<dbReference type="PIR" id="S31161">
    <property type="entry name" value="S31161"/>
</dbReference>
<dbReference type="RefSeq" id="NP_176192.1">
    <molecule id="Q07099-1"/>
    <property type="nucleotide sequence ID" value="NM_104676.5"/>
</dbReference>
<dbReference type="RefSeq" id="NP_974050.1">
    <molecule id="Q07099-2"/>
    <property type="nucleotide sequence ID" value="NM_202321.2"/>
</dbReference>
<dbReference type="SMR" id="Q07099"/>
<dbReference type="BioGRID" id="27501">
    <property type="interactions" value="16"/>
</dbReference>
<dbReference type="FunCoup" id="Q07099">
    <property type="interactions" value="3929"/>
</dbReference>
<dbReference type="IntAct" id="Q07099">
    <property type="interactions" value="1"/>
</dbReference>
<dbReference type="STRING" id="3702.Q07099"/>
<dbReference type="PaxDb" id="3702-AT1G59830.1"/>
<dbReference type="ProteomicsDB" id="248967">
    <molecule id="Q07099-1"/>
</dbReference>
<dbReference type="EnsemblPlants" id="AT1G59830.1">
    <molecule id="Q07099-1"/>
    <property type="protein sequence ID" value="AT1G59830.1"/>
    <property type="gene ID" value="AT1G59830"/>
</dbReference>
<dbReference type="EnsemblPlants" id="AT1G59830.2">
    <molecule id="Q07099-2"/>
    <property type="protein sequence ID" value="AT1G59830.2"/>
    <property type="gene ID" value="AT1G59830"/>
</dbReference>
<dbReference type="GeneID" id="842276"/>
<dbReference type="Gramene" id="AT1G59830.1">
    <molecule id="Q07099-1"/>
    <property type="protein sequence ID" value="AT1G59830.1"/>
    <property type="gene ID" value="AT1G59830"/>
</dbReference>
<dbReference type="Gramene" id="AT1G59830.2">
    <molecule id="Q07099-2"/>
    <property type="protein sequence ID" value="AT1G59830.2"/>
    <property type="gene ID" value="AT1G59830"/>
</dbReference>
<dbReference type="KEGG" id="ath:AT1G59830"/>
<dbReference type="Araport" id="AT1G59830"/>
<dbReference type="TAIR" id="AT1G59830">
    <property type="gene designation" value="PP2A-1"/>
</dbReference>
<dbReference type="eggNOG" id="KOG0371">
    <property type="taxonomic scope" value="Eukaryota"/>
</dbReference>
<dbReference type="HOGENOM" id="CLU_004962_8_1_1"/>
<dbReference type="InParanoid" id="Q07099"/>
<dbReference type="OMA" id="MECKYLQ"/>
<dbReference type="PhylomeDB" id="Q07099"/>
<dbReference type="PRO" id="PR:Q07099"/>
<dbReference type="Proteomes" id="UP000006548">
    <property type="component" value="Chromosome 1"/>
</dbReference>
<dbReference type="ExpressionAtlas" id="Q07099">
    <property type="expression patterns" value="baseline and differential"/>
</dbReference>
<dbReference type="GO" id="GO:0005829">
    <property type="term" value="C:cytosol"/>
    <property type="evidence" value="ECO:0000314"/>
    <property type="project" value="TAIR"/>
</dbReference>
<dbReference type="GO" id="GO:0005634">
    <property type="term" value="C:nucleus"/>
    <property type="evidence" value="ECO:0000314"/>
    <property type="project" value="TAIR"/>
</dbReference>
<dbReference type="GO" id="GO:0046872">
    <property type="term" value="F:metal ion binding"/>
    <property type="evidence" value="ECO:0007669"/>
    <property type="project" value="UniProtKB-KW"/>
</dbReference>
<dbReference type="GO" id="GO:0004722">
    <property type="term" value="F:protein serine/threonine phosphatase activity"/>
    <property type="evidence" value="ECO:0000250"/>
    <property type="project" value="TAIR"/>
</dbReference>
<dbReference type="CDD" id="cd07415">
    <property type="entry name" value="MPP_PP2A_PP4_PP6"/>
    <property type="match status" value="1"/>
</dbReference>
<dbReference type="FunFam" id="3.60.21.10:FF:000003">
    <property type="entry name" value="Serine/threonine-protein phosphatase"/>
    <property type="match status" value="1"/>
</dbReference>
<dbReference type="Gene3D" id="3.60.21.10">
    <property type="match status" value="1"/>
</dbReference>
<dbReference type="InterPro" id="IPR004843">
    <property type="entry name" value="Calcineurin-like_PHP_ApaH"/>
</dbReference>
<dbReference type="InterPro" id="IPR029052">
    <property type="entry name" value="Metallo-depent_PP-like"/>
</dbReference>
<dbReference type="InterPro" id="IPR047129">
    <property type="entry name" value="PPA2-like"/>
</dbReference>
<dbReference type="InterPro" id="IPR006186">
    <property type="entry name" value="Ser/Thr-sp_prot-phosphatase"/>
</dbReference>
<dbReference type="PANTHER" id="PTHR45619">
    <property type="entry name" value="SERINE/THREONINE-PROTEIN PHOSPHATASE PP2A-RELATED"/>
    <property type="match status" value="1"/>
</dbReference>
<dbReference type="Pfam" id="PF00149">
    <property type="entry name" value="Metallophos"/>
    <property type="match status" value="1"/>
</dbReference>
<dbReference type="PRINTS" id="PR00114">
    <property type="entry name" value="STPHPHTASE"/>
</dbReference>
<dbReference type="SMART" id="SM00156">
    <property type="entry name" value="PP2Ac"/>
    <property type="match status" value="1"/>
</dbReference>
<dbReference type="SUPFAM" id="SSF56300">
    <property type="entry name" value="Metallo-dependent phosphatases"/>
    <property type="match status" value="1"/>
</dbReference>
<dbReference type="PROSITE" id="PS00125">
    <property type="entry name" value="SER_THR_PHOSPHATASE"/>
    <property type="match status" value="1"/>
</dbReference>
<gene>
    <name evidence="8" type="primary">PP2A1</name>
    <name type="synonym">PP2A2</name>
    <name type="ordered locus">At1g59830</name>
    <name type="ORF">F23H11.15</name>
</gene>
<keyword id="KW-0025">Alternative splicing</keyword>
<keyword id="KW-0963">Cytoplasm</keyword>
<keyword id="KW-0378">Hydrolase</keyword>
<keyword id="KW-0464">Manganese</keyword>
<keyword id="KW-0479">Metal-binding</keyword>
<keyword id="KW-0488">Methylation</keyword>
<keyword id="KW-0597">Phosphoprotein</keyword>
<keyword id="KW-0904">Protein phosphatase</keyword>
<keyword id="KW-1185">Reference proteome</keyword>
<protein>
    <recommendedName>
        <fullName>Serine/threonine-protein phosphatase PP2A-1 catalytic subunit</fullName>
        <ecNumber>3.1.3.16</ecNumber>
    </recommendedName>
    <alternativeName>
        <fullName>Protein phosphatase 2A isoform 1</fullName>
    </alternativeName>
</protein>
<feature type="chain" id="PRO_0000058853" description="Serine/threonine-protein phosphatase PP2A-1 catalytic subunit">
    <location>
        <begin position="1"/>
        <end position="306"/>
    </location>
</feature>
<feature type="active site" description="Proton donor" evidence="1">
    <location>
        <position position="115"/>
    </location>
</feature>
<feature type="binding site" evidence="4">
    <location>
        <position position="54"/>
    </location>
    <ligand>
        <name>Mn(2+)</name>
        <dbReference type="ChEBI" id="CHEBI:29035"/>
        <label>1</label>
    </ligand>
</feature>
<feature type="binding site" evidence="4">
    <location>
        <position position="56"/>
    </location>
    <ligand>
        <name>Mn(2+)</name>
        <dbReference type="ChEBI" id="CHEBI:29035"/>
        <label>1</label>
    </ligand>
</feature>
<feature type="binding site" evidence="4">
    <location>
        <position position="82"/>
    </location>
    <ligand>
        <name>Mn(2+)</name>
        <dbReference type="ChEBI" id="CHEBI:29035"/>
        <label>1</label>
    </ligand>
</feature>
<feature type="binding site" evidence="4">
    <location>
        <position position="82"/>
    </location>
    <ligand>
        <name>Mn(2+)</name>
        <dbReference type="ChEBI" id="CHEBI:29035"/>
        <label>2</label>
    </ligand>
</feature>
<feature type="binding site" evidence="4">
    <location>
        <position position="114"/>
    </location>
    <ligand>
        <name>Mn(2+)</name>
        <dbReference type="ChEBI" id="CHEBI:29035"/>
        <label>2</label>
    </ligand>
</feature>
<feature type="binding site" evidence="4">
    <location>
        <position position="164"/>
    </location>
    <ligand>
        <name>Mn(2+)</name>
        <dbReference type="ChEBI" id="CHEBI:29035"/>
        <label>2</label>
    </ligand>
</feature>
<feature type="binding site" evidence="4">
    <location>
        <position position="238"/>
    </location>
    <ligand>
        <name>Mn(2+)</name>
        <dbReference type="ChEBI" id="CHEBI:29035"/>
        <label>2</label>
    </ligand>
</feature>
<feature type="modified residue" description="Leucine methyl ester" evidence="10">
    <location>
        <position position="306"/>
    </location>
</feature>
<feature type="splice variant" id="VSP_028727" description="In isoform 2." evidence="9">
    <original>EKNVVTVFSAPNY</original>
    <variation>VYNMCITIDWHMC</variation>
    <location>
        <begin position="250"/>
        <end position="262"/>
    </location>
</feature>
<feature type="splice variant" id="VSP_028728" description="In isoform 2." evidence="9">
    <location>
        <begin position="263"/>
        <end position="306"/>
    </location>
</feature>
<evidence type="ECO:0000250" key="1"/>
<evidence type="ECO:0000250" key="2">
    <source>
        <dbReference type="UniProtKB" id="P62714"/>
    </source>
</evidence>
<evidence type="ECO:0000250" key="3">
    <source>
        <dbReference type="UniProtKB" id="P67774"/>
    </source>
</evidence>
<evidence type="ECO:0000250" key="4">
    <source>
        <dbReference type="UniProtKB" id="P67775"/>
    </source>
</evidence>
<evidence type="ECO:0000269" key="5">
    <source>
    </source>
</evidence>
<evidence type="ECO:0000269" key="6">
    <source>
    </source>
</evidence>
<evidence type="ECO:0000269" key="7">
    <source>
    </source>
</evidence>
<evidence type="ECO:0000303" key="8">
    <source>
    </source>
</evidence>
<evidence type="ECO:0000305" key="9"/>
<evidence type="ECO:0000305" key="10">
    <source>
    </source>
</evidence>
<name>PP2A1_ARATH</name>
<reference key="1">
    <citation type="journal article" date="1993" name="Plant Mol. Biol.">
        <title>Protein phosphatases in higher plants: multiplicity of type 2A phosphatases in Arabidopsis thaliana.</title>
        <authorList>
            <person name="Arino J."/>
            <person name="Perez-Callejon E."/>
            <person name="Cunillera N."/>
            <person name="Camps M."/>
            <person name="Posas F."/>
            <person name="Ferrer A."/>
        </authorList>
    </citation>
    <scope>NUCLEOTIDE SEQUENCE [MRNA] (ISOFORM 1)</scope>
    <source>
        <strain>cv. Columbia GL1</strain>
    </source>
</reference>
<reference key="2">
    <citation type="journal article" date="2000" name="Nature">
        <title>Sequence and analysis of chromosome 1 of the plant Arabidopsis thaliana.</title>
        <authorList>
            <person name="Theologis A."/>
            <person name="Ecker J.R."/>
            <person name="Palm C.J."/>
            <person name="Federspiel N.A."/>
            <person name="Kaul S."/>
            <person name="White O."/>
            <person name="Alonso J."/>
            <person name="Altafi H."/>
            <person name="Araujo R."/>
            <person name="Bowman C.L."/>
            <person name="Brooks S.Y."/>
            <person name="Buehler E."/>
            <person name="Chan A."/>
            <person name="Chao Q."/>
            <person name="Chen H."/>
            <person name="Cheuk R.F."/>
            <person name="Chin C.W."/>
            <person name="Chung M.K."/>
            <person name="Conn L."/>
            <person name="Conway A.B."/>
            <person name="Conway A.R."/>
            <person name="Creasy T.H."/>
            <person name="Dewar K."/>
            <person name="Dunn P."/>
            <person name="Etgu P."/>
            <person name="Feldblyum T.V."/>
            <person name="Feng J.-D."/>
            <person name="Fong B."/>
            <person name="Fujii C.Y."/>
            <person name="Gill J.E."/>
            <person name="Goldsmith A.D."/>
            <person name="Haas B."/>
            <person name="Hansen N.F."/>
            <person name="Hughes B."/>
            <person name="Huizar L."/>
            <person name="Hunter J.L."/>
            <person name="Jenkins J."/>
            <person name="Johnson-Hopson C."/>
            <person name="Khan S."/>
            <person name="Khaykin E."/>
            <person name="Kim C.J."/>
            <person name="Koo H.L."/>
            <person name="Kremenetskaia I."/>
            <person name="Kurtz D.B."/>
            <person name="Kwan A."/>
            <person name="Lam B."/>
            <person name="Langin-Hooper S."/>
            <person name="Lee A."/>
            <person name="Lee J.M."/>
            <person name="Lenz C.A."/>
            <person name="Li J.H."/>
            <person name="Li Y.-P."/>
            <person name="Lin X."/>
            <person name="Liu S.X."/>
            <person name="Liu Z.A."/>
            <person name="Luros J.S."/>
            <person name="Maiti R."/>
            <person name="Marziali A."/>
            <person name="Militscher J."/>
            <person name="Miranda M."/>
            <person name="Nguyen M."/>
            <person name="Nierman W.C."/>
            <person name="Osborne B.I."/>
            <person name="Pai G."/>
            <person name="Peterson J."/>
            <person name="Pham P.K."/>
            <person name="Rizzo M."/>
            <person name="Rooney T."/>
            <person name="Rowley D."/>
            <person name="Sakano H."/>
            <person name="Salzberg S.L."/>
            <person name="Schwartz J.R."/>
            <person name="Shinn P."/>
            <person name="Southwick A.M."/>
            <person name="Sun H."/>
            <person name="Tallon L.J."/>
            <person name="Tambunga G."/>
            <person name="Toriumi M.J."/>
            <person name="Town C.D."/>
            <person name="Utterback T."/>
            <person name="Van Aken S."/>
            <person name="Vaysberg M."/>
            <person name="Vysotskaia V.S."/>
            <person name="Walker M."/>
            <person name="Wu D."/>
            <person name="Yu G."/>
            <person name="Fraser C.M."/>
            <person name="Venter J.C."/>
            <person name="Davis R.W."/>
        </authorList>
    </citation>
    <scope>NUCLEOTIDE SEQUENCE [LARGE SCALE GENOMIC DNA]</scope>
    <source>
        <strain>cv. Columbia</strain>
    </source>
</reference>
<reference key="3">
    <citation type="journal article" date="2017" name="Plant J.">
        <title>Araport11: a complete reannotation of the Arabidopsis thaliana reference genome.</title>
        <authorList>
            <person name="Cheng C.Y."/>
            <person name="Krishnakumar V."/>
            <person name="Chan A.P."/>
            <person name="Thibaud-Nissen F."/>
            <person name="Schobel S."/>
            <person name="Town C.D."/>
        </authorList>
    </citation>
    <scope>GENOME REANNOTATION</scope>
    <source>
        <strain>cv. Columbia</strain>
    </source>
</reference>
<reference key="4">
    <citation type="journal article" date="2003" name="Science">
        <title>Empirical analysis of transcriptional activity in the Arabidopsis genome.</title>
        <authorList>
            <person name="Yamada K."/>
            <person name="Lim J."/>
            <person name="Dale J.M."/>
            <person name="Chen H."/>
            <person name="Shinn P."/>
            <person name="Palm C.J."/>
            <person name="Southwick A.M."/>
            <person name="Wu H.C."/>
            <person name="Kim C.J."/>
            <person name="Nguyen M."/>
            <person name="Pham P.K."/>
            <person name="Cheuk R.F."/>
            <person name="Karlin-Newmann G."/>
            <person name="Liu S.X."/>
            <person name="Lam B."/>
            <person name="Sakano H."/>
            <person name="Wu T."/>
            <person name="Yu G."/>
            <person name="Miranda M."/>
            <person name="Quach H.L."/>
            <person name="Tripp M."/>
            <person name="Chang C.H."/>
            <person name="Lee J.M."/>
            <person name="Toriumi M.J."/>
            <person name="Chan M.M."/>
            <person name="Tang C.C."/>
            <person name="Onodera C.S."/>
            <person name="Deng J.M."/>
            <person name="Akiyama K."/>
            <person name="Ansari Y."/>
            <person name="Arakawa T."/>
            <person name="Banh J."/>
            <person name="Banno F."/>
            <person name="Bowser L."/>
            <person name="Brooks S.Y."/>
            <person name="Carninci P."/>
            <person name="Chao Q."/>
            <person name="Choy N."/>
            <person name="Enju A."/>
            <person name="Goldsmith A.D."/>
            <person name="Gurjal M."/>
            <person name="Hansen N.F."/>
            <person name="Hayashizaki Y."/>
            <person name="Johnson-Hopson C."/>
            <person name="Hsuan V.W."/>
            <person name="Iida K."/>
            <person name="Karnes M."/>
            <person name="Khan S."/>
            <person name="Koesema E."/>
            <person name="Ishida J."/>
            <person name="Jiang P.X."/>
            <person name="Jones T."/>
            <person name="Kawai J."/>
            <person name="Kamiya A."/>
            <person name="Meyers C."/>
            <person name="Nakajima M."/>
            <person name="Narusaka M."/>
            <person name="Seki M."/>
            <person name="Sakurai T."/>
            <person name="Satou M."/>
            <person name="Tamse R."/>
            <person name="Vaysberg M."/>
            <person name="Wallender E.K."/>
            <person name="Wong C."/>
            <person name="Yamamura Y."/>
            <person name="Yuan S."/>
            <person name="Shinozaki K."/>
            <person name="Davis R.W."/>
            <person name="Theologis A."/>
            <person name="Ecker J.R."/>
        </authorList>
    </citation>
    <scope>NUCLEOTIDE SEQUENCE [LARGE SCALE MRNA] (ISOFORM 1)</scope>
    <source>
        <strain>cv. Columbia</strain>
    </source>
</reference>
<reference key="5">
    <citation type="journal article" date="2007" name="Trends Plant Sci.">
        <title>Arabidopsis PPP family of serine/threonine phosphatases.</title>
        <authorList>
            <person name="Farkas I."/>
            <person name="Dombradi V."/>
            <person name="Miskei M."/>
            <person name="Szabados L."/>
            <person name="Koncz C."/>
        </authorList>
    </citation>
    <scope>GENE FAMILY</scope>
    <scope>NOMENCLATURE</scope>
</reference>
<reference key="6">
    <citation type="journal article" date="2007" name="J. Exp. Bot.">
        <title>Arabidopsis enhanced ethylene response 4 encodes an EIN3-interacting TFIID transcription factor required for proper ethylene response, including ERF1 induction.</title>
        <authorList>
            <person name="Robles L.M."/>
            <person name="Wampole J.S."/>
            <person name="Christians M.J."/>
            <person name="Larsen P.B."/>
        </authorList>
    </citation>
    <scope>INTERACTION WITH TAF12B</scope>
    <source>
        <strain>cv. Wassilewskija</strain>
    </source>
</reference>
<reference key="7">
    <citation type="journal article" date="2014" name="Plant Physiol.">
        <title>TAP46 plays a positive role in the ABSCISIC ACID INSENSITIVE5-regulated gene expression in Arabidopsis.</title>
        <authorList>
            <person name="Hu R."/>
            <person name="Zhu Y."/>
            <person name="Shen G."/>
            <person name="Zhang H."/>
        </authorList>
    </citation>
    <scope>INTERACTION WITH TAP46</scope>
</reference>
<reference key="8">
    <citation type="journal article" date="2015" name="Plant Physiol.">
        <title>Identification of Open Stomata1-interacting proteins reveals interactions with sucrose non-fermenting1-related protein kinases2 and with type 2a protein phosphatases that function in abscisic acid responses.</title>
        <authorList>
            <person name="Waadt R."/>
            <person name="Manalansan B."/>
            <person name="Rauniyar N."/>
            <person name="Munemasa S."/>
            <person name="Booker M.A."/>
            <person name="Brandt B."/>
            <person name="Waadt C."/>
            <person name="Nusinow D.A."/>
            <person name="Kay S.A."/>
            <person name="Kunz H.H."/>
            <person name="Schumacher K."/>
            <person name="DeLong A."/>
            <person name="Yates J.R. III"/>
            <person name="Schroeder J.I."/>
        </authorList>
    </citation>
    <scope>IDENTIFICATION BY MASS SPECTROMETRY</scope>
    <scope>INTERACTION WITH SRK2E/OST1</scope>
</reference>
<reference key="9">
    <citation type="journal article" date="2017" name="Plant Cell Environ.">
        <title>Methylation of protein phosphatase 2A-influence of regulators and environmental stress factors.</title>
        <authorList>
            <person name="Creighton M.T."/>
            <person name="Kolton A."/>
            <person name="Kataya A.R.A."/>
            <person name="Maple-Groedem J."/>
            <person name="Averkina I.O."/>
            <person name="Heidari B."/>
            <person name="Lillo C."/>
        </authorList>
    </citation>
    <scope>METHYLATION AT LEU-306</scope>
</reference>
<accession>Q07099</accession>
<accession>Q3ECM1</accession>
<proteinExistence type="evidence at protein level"/>
<organism>
    <name type="scientific">Arabidopsis thaliana</name>
    <name type="common">Mouse-ear cress</name>
    <dbReference type="NCBI Taxonomy" id="3702"/>
    <lineage>
        <taxon>Eukaryota</taxon>
        <taxon>Viridiplantae</taxon>
        <taxon>Streptophyta</taxon>
        <taxon>Embryophyta</taxon>
        <taxon>Tracheophyta</taxon>
        <taxon>Spermatophyta</taxon>
        <taxon>Magnoliopsida</taxon>
        <taxon>eudicotyledons</taxon>
        <taxon>Gunneridae</taxon>
        <taxon>Pentapetalae</taxon>
        <taxon>rosids</taxon>
        <taxon>malvids</taxon>
        <taxon>Brassicales</taxon>
        <taxon>Brassicaceae</taxon>
        <taxon>Camelineae</taxon>
        <taxon>Arabidopsis</taxon>
    </lineage>
</organism>